<dbReference type="EC" id="3.4.23.-"/>
<dbReference type="EC" id="2.7.7.49"/>
<dbReference type="EC" id="3.1.26.13"/>
<dbReference type="EC" id="3.1.13.2"/>
<dbReference type="EC" id="3.6.1.23"/>
<dbReference type="EC" id="2.7.7.-" evidence="1"/>
<dbReference type="EC" id="3.1.-.-" evidence="1"/>
<dbReference type="EMBL" id="M25381">
    <property type="protein sequence ID" value="AAB59937.1"/>
    <property type="status" value="ALT_SEQ"/>
    <property type="molecule type" value="Genomic_RNA"/>
</dbReference>
<dbReference type="PIR" id="B33543">
    <property type="entry name" value="GNLJFP"/>
</dbReference>
<dbReference type="RefSeq" id="NP_040973.1">
    <property type="nucleotide sequence ID" value="NC_001482.1"/>
</dbReference>
<dbReference type="PDB" id="1B11">
    <property type="method" value="X-ray"/>
    <property type="resolution" value="1.90 A"/>
    <property type="chains" value="A=42-154"/>
</dbReference>
<dbReference type="PDB" id="1DUT">
    <property type="method" value="X-ray"/>
    <property type="resolution" value="1.90 A"/>
    <property type="chains" value="A/B=711-843"/>
</dbReference>
<dbReference type="PDB" id="1F7D">
    <property type="method" value="X-ray"/>
    <property type="resolution" value="1.40 A"/>
    <property type="chains" value="A/B=711-846"/>
</dbReference>
<dbReference type="PDB" id="1F7K">
    <property type="method" value="X-ray"/>
    <property type="resolution" value="2.20 A"/>
    <property type="chains" value="A/B=711-846"/>
</dbReference>
<dbReference type="PDB" id="1F7N">
    <property type="method" value="X-ray"/>
    <property type="resolution" value="2.20 A"/>
    <property type="chains" value="A/B=711-846"/>
</dbReference>
<dbReference type="PDB" id="1F7O">
    <property type="method" value="X-ray"/>
    <property type="resolution" value="2.20 A"/>
    <property type="chains" value="A/B/C=711-846"/>
</dbReference>
<dbReference type="PDB" id="1F7P">
    <property type="method" value="X-ray"/>
    <property type="resolution" value="2.30 A"/>
    <property type="chains" value="A/B/C=711-846"/>
</dbReference>
<dbReference type="PDB" id="1F7Q">
    <property type="method" value="X-ray"/>
    <property type="resolution" value="2.26 A"/>
    <property type="chains" value="A/B/C=711-846"/>
</dbReference>
<dbReference type="PDB" id="1F7R">
    <property type="method" value="X-ray"/>
    <property type="resolution" value="2.50 A"/>
    <property type="chains" value="A=711-846"/>
</dbReference>
<dbReference type="PDB" id="1FIV">
    <property type="method" value="X-ray"/>
    <property type="resolution" value="2.00 A"/>
    <property type="chains" value="A=42-154"/>
</dbReference>
<dbReference type="PDB" id="2FIV">
    <property type="method" value="X-ray"/>
    <property type="resolution" value="2.00 A"/>
    <property type="chains" value="A/B=39-154"/>
</dbReference>
<dbReference type="PDB" id="2HAH">
    <property type="method" value="X-ray"/>
    <property type="resolution" value="1.70 A"/>
    <property type="chains" value="A=39-154"/>
</dbReference>
<dbReference type="PDB" id="3FIV">
    <property type="method" value="X-ray"/>
    <property type="resolution" value="1.85 A"/>
    <property type="chains" value="A/B=39-154"/>
</dbReference>
<dbReference type="PDB" id="3OGP">
    <property type="method" value="X-ray"/>
    <property type="resolution" value="1.70 A"/>
    <property type="chains" value="A/B=39-154"/>
</dbReference>
<dbReference type="PDB" id="3OGQ">
    <property type="method" value="X-ray"/>
    <property type="resolution" value="1.80 A"/>
    <property type="chains" value="A/B=39-154"/>
</dbReference>
<dbReference type="PDB" id="4FIV">
    <property type="method" value="X-ray"/>
    <property type="resolution" value="1.80 A"/>
    <property type="chains" value="A=42-154"/>
</dbReference>
<dbReference type="PDB" id="4MQ3">
    <property type="method" value="X-ray"/>
    <property type="resolution" value="1.08 A"/>
    <property type="chains" value="A=904-1029"/>
</dbReference>
<dbReference type="PDB" id="4PA1">
    <property type="method" value="X-ray"/>
    <property type="resolution" value="1.84 A"/>
    <property type="chains" value="A=904-1052"/>
</dbReference>
<dbReference type="PDB" id="5FIV">
    <property type="method" value="X-ray"/>
    <property type="resolution" value="1.90 A"/>
    <property type="chains" value="A=42-154"/>
</dbReference>
<dbReference type="PDB" id="6FIV">
    <property type="method" value="X-ray"/>
    <property type="resolution" value="1.90 A"/>
    <property type="chains" value="A=42-154"/>
</dbReference>
<dbReference type="PDBsum" id="1B11"/>
<dbReference type="PDBsum" id="1DUT"/>
<dbReference type="PDBsum" id="1F7D"/>
<dbReference type="PDBsum" id="1F7K"/>
<dbReference type="PDBsum" id="1F7N"/>
<dbReference type="PDBsum" id="1F7O"/>
<dbReference type="PDBsum" id="1F7P"/>
<dbReference type="PDBsum" id="1F7Q"/>
<dbReference type="PDBsum" id="1F7R"/>
<dbReference type="PDBsum" id="1FIV"/>
<dbReference type="PDBsum" id="2FIV"/>
<dbReference type="PDBsum" id="2HAH"/>
<dbReference type="PDBsum" id="3FIV"/>
<dbReference type="PDBsum" id="3OGP"/>
<dbReference type="PDBsum" id="3OGQ"/>
<dbReference type="PDBsum" id="4FIV"/>
<dbReference type="PDBsum" id="4MQ3"/>
<dbReference type="PDBsum" id="4PA1"/>
<dbReference type="PDBsum" id="5FIV"/>
<dbReference type="PDBsum" id="6FIV"/>
<dbReference type="SMR" id="P16088"/>
<dbReference type="DrugBank" id="DB07365">
    <property type="generic name" value="1-Naphthyl-L-alanine"/>
</dbReference>
<dbReference type="DrugBank" id="DB03800">
    <property type="generic name" value="Deoxyuridine monophosphate"/>
</dbReference>
<dbReference type="DrugBank" id="DB02333">
    <property type="generic name" value="Deoxyuridine-5'-Triphosphate"/>
</dbReference>
<dbReference type="DrugBank" id="DB08253">
    <property type="generic name" value="NAM NAPTHYLAMINOALANINE"/>
</dbReference>
<dbReference type="DrugBank" id="DB01891">
    <property type="generic name" value="Tl-3-093"/>
</dbReference>
<dbReference type="DrugBank" id="DB03435">
    <property type="generic name" value="Uridine-5'-Diphosphate"/>
</dbReference>
<dbReference type="MEROPS" id="A02.007"/>
<dbReference type="GeneID" id="1489989"/>
<dbReference type="KEGG" id="vg:1489989"/>
<dbReference type="BRENDA" id="3.4.23.B4">
    <property type="organism ID" value="2231"/>
</dbReference>
<dbReference type="EvolutionaryTrace" id="P16088"/>
<dbReference type="Proteomes" id="UP000242267">
    <property type="component" value="Segment"/>
</dbReference>
<dbReference type="GO" id="GO:0004190">
    <property type="term" value="F:aspartic-type endopeptidase activity"/>
    <property type="evidence" value="ECO:0007669"/>
    <property type="project" value="UniProtKB-KW"/>
</dbReference>
<dbReference type="GO" id="GO:0003677">
    <property type="term" value="F:DNA binding"/>
    <property type="evidence" value="ECO:0007669"/>
    <property type="project" value="UniProtKB-KW"/>
</dbReference>
<dbReference type="GO" id="GO:0004170">
    <property type="term" value="F:dUTP diphosphatase activity"/>
    <property type="evidence" value="ECO:0007669"/>
    <property type="project" value="UniProtKB-EC"/>
</dbReference>
<dbReference type="GO" id="GO:0004533">
    <property type="term" value="F:exoribonuclease H activity"/>
    <property type="evidence" value="ECO:0007669"/>
    <property type="project" value="UniProtKB-EC"/>
</dbReference>
<dbReference type="GO" id="GO:0000287">
    <property type="term" value="F:magnesium ion binding"/>
    <property type="evidence" value="ECO:0007669"/>
    <property type="project" value="InterPro"/>
</dbReference>
<dbReference type="GO" id="GO:0035613">
    <property type="term" value="F:RNA stem-loop binding"/>
    <property type="evidence" value="ECO:0007669"/>
    <property type="project" value="TreeGrafter"/>
</dbReference>
<dbReference type="GO" id="GO:0003964">
    <property type="term" value="F:RNA-directed DNA polymerase activity"/>
    <property type="evidence" value="ECO:0007669"/>
    <property type="project" value="UniProtKB-KW"/>
</dbReference>
<dbReference type="GO" id="GO:0004523">
    <property type="term" value="F:RNA-DNA hybrid ribonuclease activity"/>
    <property type="evidence" value="ECO:0007669"/>
    <property type="project" value="InterPro"/>
</dbReference>
<dbReference type="GO" id="GO:0008270">
    <property type="term" value="F:zinc ion binding"/>
    <property type="evidence" value="ECO:0007669"/>
    <property type="project" value="UniProtKB-KW"/>
</dbReference>
<dbReference type="GO" id="GO:0015074">
    <property type="term" value="P:DNA integration"/>
    <property type="evidence" value="ECO:0007669"/>
    <property type="project" value="UniProtKB-KW"/>
</dbReference>
<dbReference type="GO" id="GO:0006310">
    <property type="term" value="P:DNA recombination"/>
    <property type="evidence" value="ECO:0007669"/>
    <property type="project" value="UniProtKB-KW"/>
</dbReference>
<dbReference type="GO" id="GO:0006226">
    <property type="term" value="P:dUMP biosynthetic process"/>
    <property type="evidence" value="ECO:0007669"/>
    <property type="project" value="InterPro"/>
</dbReference>
<dbReference type="GO" id="GO:0046081">
    <property type="term" value="P:dUTP catabolic process"/>
    <property type="evidence" value="ECO:0007669"/>
    <property type="project" value="InterPro"/>
</dbReference>
<dbReference type="GO" id="GO:0075713">
    <property type="term" value="P:establishment of integrated proviral latency"/>
    <property type="evidence" value="ECO:0007669"/>
    <property type="project" value="UniProtKB-KW"/>
</dbReference>
<dbReference type="GO" id="GO:0006508">
    <property type="term" value="P:proteolysis"/>
    <property type="evidence" value="ECO:0007669"/>
    <property type="project" value="UniProtKB-KW"/>
</dbReference>
<dbReference type="GO" id="GO:0046718">
    <property type="term" value="P:symbiont entry into host cell"/>
    <property type="evidence" value="ECO:0007669"/>
    <property type="project" value="UniProtKB-KW"/>
</dbReference>
<dbReference type="GO" id="GO:0044826">
    <property type="term" value="P:viral genome integration into host DNA"/>
    <property type="evidence" value="ECO:0007669"/>
    <property type="project" value="UniProtKB-KW"/>
</dbReference>
<dbReference type="CDD" id="cd05482">
    <property type="entry name" value="HIV_retropepsin_like"/>
    <property type="match status" value="1"/>
</dbReference>
<dbReference type="CDD" id="cd07557">
    <property type="entry name" value="trimeric_dUTPase"/>
    <property type="match status" value="1"/>
</dbReference>
<dbReference type="Gene3D" id="1.10.10.200">
    <property type="match status" value="1"/>
</dbReference>
<dbReference type="Gene3D" id="2.70.40.10">
    <property type="match status" value="1"/>
</dbReference>
<dbReference type="Gene3D" id="3.30.70.270">
    <property type="match status" value="3"/>
</dbReference>
<dbReference type="Gene3D" id="2.40.70.10">
    <property type="entry name" value="Acid Proteases"/>
    <property type="match status" value="1"/>
</dbReference>
<dbReference type="Gene3D" id="3.10.10.10">
    <property type="entry name" value="HIV Type 1 Reverse Transcriptase, subunit A, domain 1"/>
    <property type="match status" value="1"/>
</dbReference>
<dbReference type="Gene3D" id="2.30.30.10">
    <property type="entry name" value="Integrase, C-terminal domain superfamily, retroviral"/>
    <property type="match status" value="1"/>
</dbReference>
<dbReference type="Gene3D" id="3.30.420.10">
    <property type="entry name" value="Ribonuclease H-like superfamily/Ribonuclease H"/>
    <property type="match status" value="2"/>
</dbReference>
<dbReference type="InterPro" id="IPR001969">
    <property type="entry name" value="Aspartic_peptidase_AS"/>
</dbReference>
<dbReference type="InterPro" id="IPR043502">
    <property type="entry name" value="DNA/RNA_pol_sf"/>
</dbReference>
<dbReference type="InterPro" id="IPR008181">
    <property type="entry name" value="dUTPase"/>
</dbReference>
<dbReference type="InterPro" id="IPR029054">
    <property type="entry name" value="dUTPase-like"/>
</dbReference>
<dbReference type="InterPro" id="IPR036157">
    <property type="entry name" value="dUTPase-like_sf"/>
</dbReference>
<dbReference type="InterPro" id="IPR033704">
    <property type="entry name" value="dUTPase_trimeric"/>
</dbReference>
<dbReference type="InterPro" id="IPR017856">
    <property type="entry name" value="Integrase-like_N"/>
</dbReference>
<dbReference type="InterPro" id="IPR036862">
    <property type="entry name" value="Integrase_C_dom_sf_retrovir"/>
</dbReference>
<dbReference type="InterPro" id="IPR001037">
    <property type="entry name" value="Integrase_C_retrovir"/>
</dbReference>
<dbReference type="InterPro" id="IPR001584">
    <property type="entry name" value="Integrase_cat-core"/>
</dbReference>
<dbReference type="InterPro" id="IPR003308">
    <property type="entry name" value="Integrase_Zn-bd_dom_N"/>
</dbReference>
<dbReference type="InterPro" id="IPR001995">
    <property type="entry name" value="Peptidase_A2_cat"/>
</dbReference>
<dbReference type="InterPro" id="IPR021109">
    <property type="entry name" value="Peptidase_aspartic_dom_sf"/>
</dbReference>
<dbReference type="InterPro" id="IPR034170">
    <property type="entry name" value="Retropepsin-like_cat_dom"/>
</dbReference>
<dbReference type="InterPro" id="IPR018061">
    <property type="entry name" value="Retropepsins"/>
</dbReference>
<dbReference type="InterPro" id="IPR043128">
    <property type="entry name" value="Rev_trsase/Diguanyl_cyclase"/>
</dbReference>
<dbReference type="InterPro" id="IPR012337">
    <property type="entry name" value="RNaseH-like_sf"/>
</dbReference>
<dbReference type="InterPro" id="IPR002156">
    <property type="entry name" value="RNaseH_domain"/>
</dbReference>
<dbReference type="InterPro" id="IPR036397">
    <property type="entry name" value="RNaseH_sf"/>
</dbReference>
<dbReference type="InterPro" id="IPR000477">
    <property type="entry name" value="RT_dom"/>
</dbReference>
<dbReference type="InterPro" id="IPR010659">
    <property type="entry name" value="RVT_connect"/>
</dbReference>
<dbReference type="InterPro" id="IPR010661">
    <property type="entry name" value="RVT_thumb"/>
</dbReference>
<dbReference type="NCBIfam" id="TIGR00576">
    <property type="entry name" value="dut"/>
    <property type="match status" value="1"/>
</dbReference>
<dbReference type="PANTHER" id="PTHR41694">
    <property type="entry name" value="ENDOGENOUS RETROVIRUS GROUP K MEMBER POL PROTEIN"/>
    <property type="match status" value="1"/>
</dbReference>
<dbReference type="PANTHER" id="PTHR41694:SF3">
    <property type="entry name" value="RNA-DIRECTED DNA POLYMERASE-RELATED"/>
    <property type="match status" value="1"/>
</dbReference>
<dbReference type="Pfam" id="PF00692">
    <property type="entry name" value="dUTPase"/>
    <property type="match status" value="1"/>
</dbReference>
<dbReference type="Pfam" id="PF00552">
    <property type="entry name" value="IN_DBD_C"/>
    <property type="match status" value="1"/>
</dbReference>
<dbReference type="Pfam" id="PF00075">
    <property type="entry name" value="RNase_H"/>
    <property type="match status" value="1"/>
</dbReference>
<dbReference type="Pfam" id="PF00665">
    <property type="entry name" value="rve"/>
    <property type="match status" value="1"/>
</dbReference>
<dbReference type="Pfam" id="PF00077">
    <property type="entry name" value="RVP"/>
    <property type="match status" value="1"/>
</dbReference>
<dbReference type="Pfam" id="PF00078">
    <property type="entry name" value="RVT_1"/>
    <property type="match status" value="1"/>
</dbReference>
<dbReference type="Pfam" id="PF06815">
    <property type="entry name" value="RVT_connect"/>
    <property type="match status" value="1"/>
</dbReference>
<dbReference type="Pfam" id="PF06817">
    <property type="entry name" value="RVT_thumb"/>
    <property type="match status" value="1"/>
</dbReference>
<dbReference type="SUPFAM" id="SSF50630">
    <property type="entry name" value="Acid proteases"/>
    <property type="match status" value="1"/>
</dbReference>
<dbReference type="SUPFAM" id="SSF50122">
    <property type="entry name" value="DNA-binding domain of retroviral integrase"/>
    <property type="match status" value="1"/>
</dbReference>
<dbReference type="SUPFAM" id="SSF56672">
    <property type="entry name" value="DNA/RNA polymerases"/>
    <property type="match status" value="1"/>
</dbReference>
<dbReference type="SUPFAM" id="SSF51283">
    <property type="entry name" value="dUTPase-like"/>
    <property type="match status" value="1"/>
</dbReference>
<dbReference type="SUPFAM" id="SSF46919">
    <property type="entry name" value="N-terminal Zn binding domain of HIV integrase"/>
    <property type="match status" value="1"/>
</dbReference>
<dbReference type="SUPFAM" id="SSF53098">
    <property type="entry name" value="Ribonuclease H-like"/>
    <property type="match status" value="2"/>
</dbReference>
<dbReference type="PROSITE" id="PS50175">
    <property type="entry name" value="ASP_PROT_RETROV"/>
    <property type="match status" value="1"/>
</dbReference>
<dbReference type="PROSITE" id="PS00141">
    <property type="entry name" value="ASP_PROTEASE"/>
    <property type="match status" value="1"/>
</dbReference>
<dbReference type="PROSITE" id="PS50994">
    <property type="entry name" value="INTEGRASE"/>
    <property type="match status" value="1"/>
</dbReference>
<dbReference type="PROSITE" id="PS51027">
    <property type="entry name" value="INTEGRASE_DBD"/>
    <property type="match status" value="1"/>
</dbReference>
<dbReference type="PROSITE" id="PS50879">
    <property type="entry name" value="RNASE_H_1"/>
    <property type="match status" value="1"/>
</dbReference>
<dbReference type="PROSITE" id="PS50878">
    <property type="entry name" value="RT_POL"/>
    <property type="match status" value="1"/>
</dbReference>
<dbReference type="PROSITE" id="PS50876">
    <property type="entry name" value="ZF_INTEGRASE"/>
    <property type="match status" value="1"/>
</dbReference>
<organism>
    <name type="scientific">Feline immunodeficiency virus (isolate Petaluma)</name>
    <name type="common">FIV</name>
    <dbReference type="NCBI Taxonomy" id="11674"/>
    <lineage>
        <taxon>Viruses</taxon>
        <taxon>Riboviria</taxon>
        <taxon>Pararnavirae</taxon>
        <taxon>Artverviricota</taxon>
        <taxon>Revtraviricetes</taxon>
        <taxon>Ortervirales</taxon>
        <taxon>Retroviridae</taxon>
        <taxon>Orthoretrovirinae</taxon>
        <taxon>Lentivirus</taxon>
        <taxon>Feline immunodeficiency virus</taxon>
    </lineage>
</organism>
<sequence>KEFGKLEGGASCSPSESNAASSNAICTSNGGETIGFVNYNKVGTTTTLEKRPEILIFVNGYPIKFLLDTGADITILNRRDFQVKNSIENGRQNMIGVGGGKRGTNYINVHLEIRDENYKTQCIFGNVCVLEDNSLIQPLLGRDNMIKFNIRLVMAQISDKIPVVKVKMKDPNKGPQIKQWPLTNEKIEALTEIVERLEKEGKVKRADSNNPWNTPVFAIKKKSGKWRMLIDFRELNKLTEKGAEVQLGLPHPAGLQIKKQVTVLDIGDAYFTIPLDPDYAPYTAFTLPRKNNAGPGRRFVWCSLPQGWILSPLIYQSTLDNIIQPFIRQNPQLDIYQYMDDIYIGSNLSKKEHKEKVEELRKLLLWWGFETPEDKLQEEPPYTWMGYELHPLTWTIQQKQLDIPEQPTLNELQKLAGKINWASQAIPDLSIKALTNMMRGNQNLNSTRQWTKEARLEVQKAKKAIEEQVQLGYYDPSKELYAKLSLVGPHQISYQVYQKDPEKILWYGKMSRQKKKAENTCDIALRACYKIREESIIRIGKEPRYEIPTSREAWESNLINSPYLKAPPPEVEYIHAALNIKRALSMIKDAPIPGAETWYIDGGRKLGKAAKAAYWTDTGKWRVMDLEGSNQKAEIQALLLALKAGSEEMNIITDSQYVINIILQQPDMMEGIWQEVLEELEKKTAIFIDWVPGHKGIPGNEEVDKLCQTMMIIEGDGILDKRSEDAGYDLLAAKEIHLLPGEVKVIPTGVKLMLPKGYWGLIIGKSSIGSKGLDVLGGVIDEGYRGEIGVIMINVSRKSITLMERQKIAQLIILPCKHEVLEQGKVVMDSERGDNGYGSTGVFSSWVDRIEEAEINHEKFHSDPQYLRTEFNLPKMVAEEIRRKCPVCRIIGEQVGGQLKIGPGIWQMDCTHFDGKIILVGIHVESGYIWAQIISQETADCTVKAVLQLLSAHNVTELQTDNGPNFKNQKMEGVLNYMGVKHKFGIPGNPQSQALVENVNHTLKVWIQKFLPETTSLDNALSLAVHSLNFKRRGRIGGMAPYELLAQQESLRIQDYFSAIPQKLQAQWIYYKDQKDKKWKGPMRVEYWGQGSVLLKDEEKGYFLIPRRHIRRVPEPCALPEGDE</sequence>
<feature type="chain" id="PRO_0000038841" description="Protease">
    <location>
        <begin position="1"/>
        <end position="154"/>
    </location>
</feature>
<feature type="chain" id="PRO_0000038842" description="Reverse transcriptase/ribonuclease H">
    <location>
        <begin position="155"/>
        <end position="690"/>
    </location>
</feature>
<feature type="chain" id="PRO_0000038843" description="Deoxyuridine 5'-triphosphate nucleotidohydrolase">
    <location>
        <begin position="691"/>
        <end position="843"/>
    </location>
</feature>
<feature type="chain" id="PRO_0000038844" description="Integrase">
    <location>
        <begin position="844"/>
        <end position="1124"/>
    </location>
</feature>
<feature type="domain" description="Peptidase A2" evidence="2">
    <location>
        <begin position="63"/>
        <end position="144"/>
    </location>
</feature>
<feature type="domain" description="Reverse transcriptase" evidence="3">
    <location>
        <begin position="200"/>
        <end position="389"/>
    </location>
</feature>
<feature type="domain" description="RNase H type-1" evidence="4">
    <location>
        <begin position="592"/>
        <end position="712"/>
    </location>
</feature>
<feature type="domain" description="Integrase catalytic" evidence="6">
    <location>
        <begin position="899"/>
        <end position="1049"/>
    </location>
</feature>
<feature type="zinc finger region" description="Integrase-type" evidence="5">
    <location>
        <begin position="848"/>
        <end position="889"/>
    </location>
</feature>
<feature type="DNA-binding region" description="Integrase-type" evidence="7">
    <location>
        <begin position="1067"/>
        <end position="1115"/>
    </location>
</feature>
<feature type="active site" description="For protease activity">
    <location>
        <position position="68"/>
    </location>
</feature>
<feature type="binding site" evidence="4">
    <location>
        <position position="601"/>
    </location>
    <ligand>
        <name>Mg(2+)</name>
        <dbReference type="ChEBI" id="CHEBI:18420"/>
        <label>1</label>
    </ligand>
</feature>
<feature type="binding site" evidence="4">
    <location>
        <position position="601"/>
    </location>
    <ligand>
        <name>Mg(2+)</name>
        <dbReference type="ChEBI" id="CHEBI:18420"/>
        <label>2</label>
    </ligand>
</feature>
<feature type="binding site" evidence="4">
    <location>
        <position position="634"/>
    </location>
    <ligand>
        <name>Mg(2+)</name>
        <dbReference type="ChEBI" id="CHEBI:18420"/>
        <label>1</label>
    </ligand>
</feature>
<feature type="binding site" evidence="4">
    <location>
        <position position="654"/>
    </location>
    <ligand>
        <name>Mg(2+)</name>
        <dbReference type="ChEBI" id="CHEBI:18420"/>
        <label>1</label>
    </ligand>
</feature>
<feature type="binding site" evidence="4">
    <location>
        <position position="704"/>
    </location>
    <ligand>
        <name>Mg(2+)</name>
        <dbReference type="ChEBI" id="CHEBI:18420"/>
        <label>2</label>
    </ligand>
</feature>
<feature type="binding site" evidence="5">
    <location>
        <position position="857"/>
    </location>
    <ligand>
        <name>Zn(2+)</name>
        <dbReference type="ChEBI" id="CHEBI:29105"/>
    </ligand>
</feature>
<feature type="binding site" evidence="5">
    <location>
        <position position="861"/>
    </location>
    <ligand>
        <name>Zn(2+)</name>
        <dbReference type="ChEBI" id="CHEBI:29105"/>
    </ligand>
</feature>
<feature type="binding site" evidence="5">
    <location>
        <position position="885"/>
    </location>
    <ligand>
        <name>Zn(2+)</name>
        <dbReference type="ChEBI" id="CHEBI:29105"/>
    </ligand>
</feature>
<feature type="binding site" evidence="5">
    <location>
        <position position="888"/>
    </location>
    <ligand>
        <name>Zn(2+)</name>
        <dbReference type="ChEBI" id="CHEBI:29105"/>
    </ligand>
</feature>
<feature type="strand" evidence="14">
    <location>
        <begin position="48"/>
        <end position="50"/>
    </location>
</feature>
<feature type="strand" evidence="14">
    <location>
        <begin position="53"/>
        <end position="58"/>
    </location>
</feature>
<feature type="strand" evidence="14">
    <location>
        <begin position="61"/>
        <end position="67"/>
    </location>
</feature>
<feature type="strand" evidence="13">
    <location>
        <begin position="71"/>
        <end position="73"/>
    </location>
</feature>
<feature type="strand" evidence="14">
    <location>
        <begin position="75"/>
        <end position="77"/>
    </location>
</feature>
<feature type="helix" evidence="14">
    <location>
        <begin position="78"/>
        <end position="80"/>
    </location>
</feature>
<feature type="strand" evidence="14">
    <location>
        <begin position="87"/>
        <end position="96"/>
    </location>
</feature>
<feature type="strand" evidence="14">
    <location>
        <begin position="99"/>
        <end position="113"/>
    </location>
</feature>
<feature type="turn" evidence="14">
    <location>
        <begin position="115"/>
        <end position="117"/>
    </location>
</feature>
<feature type="strand" evidence="14">
    <location>
        <begin position="121"/>
        <end position="130"/>
    </location>
</feature>
<feature type="strand" evidence="14">
    <location>
        <begin position="136"/>
        <end position="140"/>
    </location>
</feature>
<feature type="helix" evidence="14">
    <location>
        <begin position="142"/>
        <end position="145"/>
    </location>
</feature>
<feature type="turn" evidence="14">
    <location>
        <begin position="146"/>
        <end position="149"/>
    </location>
</feature>
<feature type="strand" evidence="14">
    <location>
        <begin position="151"/>
        <end position="153"/>
    </location>
</feature>
<feature type="strand" evidence="9">
    <location>
        <begin position="713"/>
        <end position="718"/>
    </location>
</feature>
<feature type="strand" evidence="9">
    <location>
        <begin position="726"/>
        <end position="731"/>
    </location>
</feature>
<feature type="strand" evidence="9">
    <location>
        <begin position="736"/>
        <end position="738"/>
    </location>
</feature>
<feature type="strand" evidence="9">
    <location>
        <begin position="743"/>
        <end position="747"/>
    </location>
</feature>
<feature type="strand" evidence="10">
    <location>
        <begin position="751"/>
        <end position="753"/>
    </location>
</feature>
<feature type="strand" evidence="9">
    <location>
        <begin position="758"/>
        <end position="763"/>
    </location>
</feature>
<feature type="helix" evidence="9">
    <location>
        <begin position="766"/>
        <end position="769"/>
    </location>
</feature>
<feature type="turn" evidence="9">
    <location>
        <begin position="770"/>
        <end position="772"/>
    </location>
</feature>
<feature type="strand" evidence="9">
    <location>
        <begin position="773"/>
        <end position="776"/>
    </location>
</feature>
<feature type="strand" evidence="11">
    <location>
        <begin position="778"/>
        <end position="780"/>
    </location>
</feature>
<feature type="strand" evidence="9">
    <location>
        <begin position="789"/>
        <end position="794"/>
    </location>
</feature>
<feature type="strand" evidence="9">
    <location>
        <begin position="796"/>
        <end position="798"/>
    </location>
</feature>
<feature type="strand" evidence="9">
    <location>
        <begin position="800"/>
        <end position="802"/>
    </location>
</feature>
<feature type="strand" evidence="9">
    <location>
        <begin position="807"/>
        <end position="815"/>
    </location>
</feature>
<feature type="strand" evidence="12">
    <location>
        <begin position="830"/>
        <end position="832"/>
    </location>
</feature>
<feature type="strand" evidence="15">
    <location>
        <begin position="905"/>
        <end position="913"/>
    </location>
</feature>
<feature type="strand" evidence="15">
    <location>
        <begin position="916"/>
        <end position="923"/>
    </location>
</feature>
<feature type="turn" evidence="15">
    <location>
        <begin position="924"/>
        <end position="926"/>
    </location>
</feature>
<feature type="strand" evidence="15">
    <location>
        <begin position="929"/>
        <end position="935"/>
    </location>
</feature>
<feature type="helix" evidence="15">
    <location>
        <begin position="939"/>
        <end position="952"/>
    </location>
</feature>
<feature type="strand" evidence="15">
    <location>
        <begin position="956"/>
        <end position="961"/>
    </location>
</feature>
<feature type="turn" evidence="15">
    <location>
        <begin position="964"/>
        <end position="966"/>
    </location>
</feature>
<feature type="helix" evidence="15">
    <location>
        <begin position="969"/>
        <end position="978"/>
    </location>
</feature>
<feature type="strand" evidence="15">
    <location>
        <begin position="981"/>
        <end position="986"/>
    </location>
</feature>
<feature type="turn" evidence="15">
    <location>
        <begin position="990"/>
        <end position="992"/>
    </location>
</feature>
<feature type="helix" evidence="15">
    <location>
        <begin position="994"/>
        <end position="1010"/>
    </location>
</feature>
<feature type="helix" evidence="15">
    <location>
        <begin position="1011"/>
        <end position="1013"/>
    </location>
</feature>
<feature type="strand" evidence="15">
    <location>
        <begin position="1014"/>
        <end position="1016"/>
    </location>
</feature>
<feature type="helix" evidence="15">
    <location>
        <begin position="1017"/>
        <end position="1029"/>
    </location>
</feature>
<feature type="helix" evidence="16">
    <location>
        <begin position="1041"/>
        <end position="1051"/>
    </location>
</feature>
<keyword id="KW-0002">3D-structure</keyword>
<keyword id="KW-0064">Aspartyl protease</keyword>
<keyword id="KW-0229">DNA integration</keyword>
<keyword id="KW-0233">DNA recombination</keyword>
<keyword id="KW-0238">DNA-binding</keyword>
<keyword id="KW-0255">Endonuclease</keyword>
<keyword id="KW-0378">Hydrolase</keyword>
<keyword id="KW-0479">Metal-binding</keyword>
<keyword id="KW-0511">Multifunctional enzyme</keyword>
<keyword id="KW-0540">Nuclease</keyword>
<keyword id="KW-0546">Nucleotide metabolism</keyword>
<keyword id="KW-0548">Nucleotidyltransferase</keyword>
<keyword id="KW-0645">Protease</keyword>
<keyword id="KW-1185">Reference proteome</keyword>
<keyword id="KW-0695">RNA-directed DNA polymerase</keyword>
<keyword id="KW-0808">Transferase</keyword>
<keyword id="KW-1179">Viral genome integration</keyword>
<keyword id="KW-1160">Virus entry into host cell</keyword>
<keyword id="KW-0862">Zinc</keyword>
<keyword id="KW-0863">Zinc-finger</keyword>
<protein>
    <recommendedName>
        <fullName>Pol polyprotein</fullName>
    </recommendedName>
    <component>
        <recommendedName>
            <fullName>Protease</fullName>
        </recommendedName>
        <alternativeName>
            <fullName>Retropepsin</fullName>
            <ecNumber>3.4.23.-</ecNumber>
        </alternativeName>
    </component>
    <component>
        <recommendedName>
            <fullName>Reverse transcriptase/ribonuclease H</fullName>
            <shortName>RT</shortName>
            <ecNumber>2.7.7.49</ecNumber>
            <ecNumber>3.1.26.13</ecNumber>
        </recommendedName>
        <alternativeName>
            <fullName>Exoribonuclease H</fullName>
            <ecNumber>3.1.13.2</ecNumber>
        </alternativeName>
    </component>
    <component>
        <recommendedName>
            <fullName>Deoxyuridine 5'-triphosphate nucleotidohydrolase</fullName>
            <shortName>dUTPase</shortName>
            <ecNumber>3.6.1.23</ecNumber>
        </recommendedName>
    </component>
    <component>
        <recommendedName>
            <fullName>Integrase</fullName>
            <shortName>IN</shortName>
            <ecNumber evidence="1">2.7.7.-</ecNumber>
            <ecNumber evidence="1">3.1.-.-</ecNumber>
        </recommendedName>
    </component>
</protein>
<comment type="function">
    <text>During replicative cycle of retroviruses, the reverse-transcribed viral DNA is integrated into the host chromosome by the viral integrase enzyme. RNase H activity is associated with the reverse transcriptase.</text>
</comment>
<comment type="catalytic activity">
    <reaction>
        <text>Endohydrolysis of RNA in RNA/DNA hybrids. Three different cleavage modes: 1. sequence-specific internal cleavage of RNA. Human immunodeficiency virus type 1 and Moloney murine leukemia virus enzymes prefer to cleave the RNA strand one nucleotide away from the RNA-DNA junction. 2. RNA 5'-end directed cleavage 13-19 nucleotides from the RNA end. 3. DNA 3'-end directed cleavage 15-20 nucleotides away from the primer terminus.</text>
        <dbReference type="EC" id="3.1.26.13"/>
    </reaction>
</comment>
<comment type="catalytic activity">
    <reaction>
        <text>3'-end directed exonucleolytic cleavage of viral RNA-DNA hybrid.</text>
        <dbReference type="EC" id="3.1.13.2"/>
    </reaction>
</comment>
<comment type="catalytic activity">
    <reaction>
        <text>dUTP + H2O = dUMP + diphosphate + H(+)</text>
        <dbReference type="Rhea" id="RHEA:10248"/>
        <dbReference type="ChEBI" id="CHEBI:15377"/>
        <dbReference type="ChEBI" id="CHEBI:15378"/>
        <dbReference type="ChEBI" id="CHEBI:33019"/>
        <dbReference type="ChEBI" id="CHEBI:61555"/>
        <dbReference type="ChEBI" id="CHEBI:246422"/>
        <dbReference type="EC" id="3.6.1.23"/>
    </reaction>
</comment>
<comment type="catalytic activity">
    <reaction evidence="3">
        <text>DNA(n) + a 2'-deoxyribonucleoside 5'-triphosphate = DNA(n+1) + diphosphate</text>
        <dbReference type="Rhea" id="RHEA:22508"/>
        <dbReference type="Rhea" id="RHEA-COMP:17339"/>
        <dbReference type="Rhea" id="RHEA-COMP:17340"/>
        <dbReference type="ChEBI" id="CHEBI:33019"/>
        <dbReference type="ChEBI" id="CHEBI:61560"/>
        <dbReference type="ChEBI" id="CHEBI:173112"/>
        <dbReference type="EC" id="2.7.7.49"/>
    </reaction>
</comment>
<comment type="PTM">
    <text>Cleavage sites that yield the mature proteins remain to be determined.</text>
</comment>
<comment type="similarity">
    <text evidence="8">Belongs to the retroviral Pol polyprotein family.</text>
</comment>
<gene>
    <name type="primary">pol</name>
</gene>
<reference key="1">
    <citation type="journal article" date="1989" name="Proc. Natl. Acad. Sci. U.S.A.">
        <title>Nucleotide sequence and genomic organization of feline immunodeficiency virus.</title>
        <authorList>
            <person name="Talbott R.L."/>
            <person name="Sparger E.E."/>
            <person name="Lovelace K.M."/>
            <person name="Fitch W.M."/>
            <person name="Pedersen N.C."/>
            <person name="Luciw P.A."/>
            <person name="Elder J.H."/>
        </authorList>
    </citation>
    <scope>NUCLEOTIDE SEQUENCE [GENOMIC RNA]</scope>
    <source>
        <strain>Clone 34TF10</strain>
    </source>
</reference>
<reference key="2">
    <citation type="journal article" date="1989" name="Proc. Natl. Acad. Sci. U.S.A.">
        <title>Nucleotide sequence analysis of feline immunodeficiency virus: genome organization and relationship to other lentiviruses.</title>
        <authorList>
            <person name="Olmsted R.A."/>
            <person name="Hirsch V.M."/>
            <person name="Purcell R.H."/>
            <person name="Johnson P.R."/>
        </authorList>
    </citation>
    <scope>NUCLEOTIDE SEQUENCE [GENOMIC RNA]</scope>
    <source>
        <strain>Clone FIV-14</strain>
    </source>
</reference>
<reference key="3">
    <citation type="journal article" date="1993" name="J. Virol.">
        <title>Identification of proteolytic processing sites within the Gag and Pol polyproteins of feline immunodeficiency virus.</title>
        <authorList>
            <person name="Elder J.H."/>
            <person name="Schnoelzer M."/>
            <person name="Hasselkus-Light C.S."/>
            <person name="Henson M."/>
            <person name="Lerner D.A."/>
            <person name="Phillips T.R."/>
            <person name="Wagaman P.C."/>
            <person name="Kent S.B.H."/>
        </authorList>
    </citation>
    <scope>PROTEOLYTIC PROCESSING OF POLYPROTEIN</scope>
</reference>
<reference key="4">
    <citation type="journal article" date="1995" name="Nat. Struct. Biol.">
        <title>Structure of an inhibitor complex of the proteinase from feline immunodeficiency virus.</title>
        <authorList>
            <person name="Wlodawer A."/>
            <person name="Gustchina A."/>
            <person name="Reshetnikova L."/>
            <person name="Lubkowski J."/>
            <person name="Zdanov J.A."/>
            <person name="Hui K.Y."/>
            <person name="Angleton E.L."/>
            <person name="Farmerie W.G."/>
            <person name="Goodenow M.M."/>
            <person name="Bhatt D."/>
            <person name="Zhang L."/>
            <person name="Dunn B.M."/>
        </authorList>
    </citation>
    <scope>X-RAY CRYSTALLOGRAPHY (2.0 ANGSTROMS) OF 42-154</scope>
</reference>
<reference key="5">
    <citation type="journal article" date="1997" name="Biochemistry">
        <title>Crystal structures of the inactive D30N mutant of feline immunodeficiency virus protease complexed with a substrate and an inhibitor.</title>
        <authorList>
            <person name="Laco G.S."/>
            <person name="Schalk-Hihi C."/>
            <person name="Lubkowski J."/>
            <person name="Morris G."/>
            <person name="Zdanov A."/>
            <person name="Olson A."/>
            <person name="Elder J.H."/>
            <person name="Wlodawer A."/>
            <person name="Gustchina A."/>
        </authorList>
    </citation>
    <scope>X-RAY CRYSTALLOGRAPHY (2.0 ANGSTROMS) OF 42-154</scope>
</reference>
<reference key="6">
    <citation type="journal article" date="1996" name="Protein Sci.">
        <title>Crystal structure of dUTP pyrophosphatase from feline immunodeficiency virus.</title>
        <authorList>
            <person name="Prasad G.S."/>
            <person name="Stura E.A."/>
            <person name="McRee D.E."/>
            <person name="Laco G.S."/>
            <person name="Hasselkus-Light C."/>
            <person name="Elder J.H."/>
            <person name="Stout C.D."/>
        </authorList>
    </citation>
    <scope>X-RAY CRYSTALLOGRAPHY (1.9 ANGSTROMS) OF 711-827</scope>
</reference>
<name>POL_FIVPE</name>
<accession>P16088</accession>
<proteinExistence type="evidence at protein level"/>
<organismHost>
    <name type="scientific">Felidae</name>
    <name type="common">cat family</name>
    <dbReference type="NCBI Taxonomy" id="9681"/>
</organismHost>
<evidence type="ECO:0000250" key="1">
    <source>
        <dbReference type="UniProtKB" id="P04585"/>
    </source>
</evidence>
<evidence type="ECO:0000255" key="2">
    <source>
        <dbReference type="PROSITE-ProRule" id="PRU00275"/>
    </source>
</evidence>
<evidence type="ECO:0000255" key="3">
    <source>
        <dbReference type="PROSITE-ProRule" id="PRU00405"/>
    </source>
</evidence>
<evidence type="ECO:0000255" key="4">
    <source>
        <dbReference type="PROSITE-ProRule" id="PRU00408"/>
    </source>
</evidence>
<evidence type="ECO:0000255" key="5">
    <source>
        <dbReference type="PROSITE-ProRule" id="PRU00450"/>
    </source>
</evidence>
<evidence type="ECO:0000255" key="6">
    <source>
        <dbReference type="PROSITE-ProRule" id="PRU00457"/>
    </source>
</evidence>
<evidence type="ECO:0000255" key="7">
    <source>
        <dbReference type="PROSITE-ProRule" id="PRU00506"/>
    </source>
</evidence>
<evidence type="ECO:0000305" key="8"/>
<evidence type="ECO:0007829" key="9">
    <source>
        <dbReference type="PDB" id="1F7D"/>
    </source>
</evidence>
<evidence type="ECO:0007829" key="10">
    <source>
        <dbReference type="PDB" id="1F7N"/>
    </source>
</evidence>
<evidence type="ECO:0007829" key="11">
    <source>
        <dbReference type="PDB" id="1F7O"/>
    </source>
</evidence>
<evidence type="ECO:0007829" key="12">
    <source>
        <dbReference type="PDB" id="1F7R"/>
    </source>
</evidence>
<evidence type="ECO:0007829" key="13">
    <source>
        <dbReference type="PDB" id="3FIV"/>
    </source>
</evidence>
<evidence type="ECO:0007829" key="14">
    <source>
        <dbReference type="PDB" id="3OGP"/>
    </source>
</evidence>
<evidence type="ECO:0007829" key="15">
    <source>
        <dbReference type="PDB" id="4MQ3"/>
    </source>
</evidence>
<evidence type="ECO:0007829" key="16">
    <source>
        <dbReference type="PDB" id="4PA1"/>
    </source>
</evidence>